<comment type="function">
    <text evidence="1">DNA ligase that seals nicks in double-stranded DNA during DNA replication, DNA recombination and DNA repair.</text>
</comment>
<comment type="catalytic activity">
    <reaction evidence="1">
        <text>ATP + (deoxyribonucleotide)n-3'-hydroxyl + 5'-phospho-(deoxyribonucleotide)m = (deoxyribonucleotide)n+m + AMP + diphosphate.</text>
        <dbReference type="EC" id="6.5.1.1"/>
    </reaction>
</comment>
<comment type="cofactor">
    <cofactor evidence="1">
        <name>Mg(2+)</name>
        <dbReference type="ChEBI" id="CHEBI:18420"/>
    </cofactor>
</comment>
<comment type="similarity">
    <text evidence="1">Belongs to the ATP-dependent DNA ligase family.</text>
</comment>
<accession>A8AB20</accession>
<organism>
    <name type="scientific">Ignicoccus hospitalis (strain KIN4/I / DSM 18386 / JCM 14125)</name>
    <dbReference type="NCBI Taxonomy" id="453591"/>
    <lineage>
        <taxon>Archaea</taxon>
        <taxon>Thermoproteota</taxon>
        <taxon>Thermoprotei</taxon>
        <taxon>Desulfurococcales</taxon>
        <taxon>Desulfurococcaceae</taxon>
        <taxon>Ignicoccus</taxon>
    </lineage>
</organism>
<feature type="chain" id="PRO_1000049867" description="DNA ligase">
    <location>
        <begin position="1"/>
        <end position="594"/>
    </location>
</feature>
<feature type="active site" description="N6-AMP-lysine intermediate" evidence="1">
    <location>
        <position position="258"/>
    </location>
</feature>
<feature type="binding site" evidence="1">
    <location>
        <position position="256"/>
    </location>
    <ligand>
        <name>ATP</name>
        <dbReference type="ChEBI" id="CHEBI:30616"/>
    </ligand>
</feature>
<feature type="binding site" evidence="1">
    <location>
        <position position="263"/>
    </location>
    <ligand>
        <name>ATP</name>
        <dbReference type="ChEBI" id="CHEBI:30616"/>
    </ligand>
</feature>
<feature type="binding site" evidence="1">
    <location>
        <position position="279"/>
    </location>
    <ligand>
        <name>ATP</name>
        <dbReference type="ChEBI" id="CHEBI:30616"/>
    </ligand>
</feature>
<feature type="binding site" evidence="1">
    <location>
        <position position="309"/>
    </location>
    <ligand>
        <name>ATP</name>
        <dbReference type="ChEBI" id="CHEBI:30616"/>
    </ligand>
</feature>
<feature type="binding site" evidence="1">
    <location>
        <position position="349"/>
    </location>
    <ligand>
        <name>ATP</name>
        <dbReference type="ChEBI" id="CHEBI:30616"/>
    </ligand>
</feature>
<feature type="binding site" evidence="1">
    <location>
        <position position="426"/>
    </location>
    <ligand>
        <name>ATP</name>
        <dbReference type="ChEBI" id="CHEBI:30616"/>
    </ligand>
</feature>
<feature type="binding site" evidence="1">
    <location>
        <position position="432"/>
    </location>
    <ligand>
        <name>ATP</name>
        <dbReference type="ChEBI" id="CHEBI:30616"/>
    </ligand>
</feature>
<protein>
    <recommendedName>
        <fullName evidence="1">DNA ligase</fullName>
        <ecNumber evidence="1">6.5.1.1</ecNumber>
    </recommendedName>
    <alternativeName>
        <fullName evidence="1">Polydeoxyribonucleotide synthase [ATP]</fullName>
    </alternativeName>
</protein>
<dbReference type="EC" id="6.5.1.1" evidence="1"/>
<dbReference type="EMBL" id="CP000816">
    <property type="protein sequence ID" value="ABU82122.1"/>
    <property type="molecule type" value="Genomic_DNA"/>
</dbReference>
<dbReference type="RefSeq" id="WP_012123086.1">
    <property type="nucleotide sequence ID" value="NC_009776.1"/>
</dbReference>
<dbReference type="SMR" id="A8AB20"/>
<dbReference type="STRING" id="453591.Igni_0942"/>
<dbReference type="GeneID" id="5562329"/>
<dbReference type="KEGG" id="iho:Igni_0942"/>
<dbReference type="eggNOG" id="arCOG01347">
    <property type="taxonomic scope" value="Archaea"/>
</dbReference>
<dbReference type="HOGENOM" id="CLU_005138_6_0_2"/>
<dbReference type="OrthoDB" id="31274at2157"/>
<dbReference type="PhylomeDB" id="A8AB20"/>
<dbReference type="Proteomes" id="UP000000262">
    <property type="component" value="Chromosome"/>
</dbReference>
<dbReference type="GO" id="GO:0005524">
    <property type="term" value="F:ATP binding"/>
    <property type="evidence" value="ECO:0007669"/>
    <property type="project" value="UniProtKB-UniRule"/>
</dbReference>
<dbReference type="GO" id="GO:0003677">
    <property type="term" value="F:DNA binding"/>
    <property type="evidence" value="ECO:0007669"/>
    <property type="project" value="InterPro"/>
</dbReference>
<dbReference type="GO" id="GO:0003910">
    <property type="term" value="F:DNA ligase (ATP) activity"/>
    <property type="evidence" value="ECO:0007669"/>
    <property type="project" value="UniProtKB-UniRule"/>
</dbReference>
<dbReference type="GO" id="GO:0046872">
    <property type="term" value="F:metal ion binding"/>
    <property type="evidence" value="ECO:0007669"/>
    <property type="project" value="UniProtKB-KW"/>
</dbReference>
<dbReference type="GO" id="GO:0051301">
    <property type="term" value="P:cell division"/>
    <property type="evidence" value="ECO:0007669"/>
    <property type="project" value="UniProtKB-KW"/>
</dbReference>
<dbReference type="GO" id="GO:0071897">
    <property type="term" value="P:DNA biosynthetic process"/>
    <property type="evidence" value="ECO:0007669"/>
    <property type="project" value="InterPro"/>
</dbReference>
<dbReference type="GO" id="GO:0006310">
    <property type="term" value="P:DNA recombination"/>
    <property type="evidence" value="ECO:0007669"/>
    <property type="project" value="UniProtKB-UniRule"/>
</dbReference>
<dbReference type="GO" id="GO:0006281">
    <property type="term" value="P:DNA repair"/>
    <property type="evidence" value="ECO:0007669"/>
    <property type="project" value="UniProtKB-UniRule"/>
</dbReference>
<dbReference type="GO" id="GO:0006273">
    <property type="term" value="P:lagging strand elongation"/>
    <property type="evidence" value="ECO:0007669"/>
    <property type="project" value="TreeGrafter"/>
</dbReference>
<dbReference type="CDD" id="cd07901">
    <property type="entry name" value="Adenylation_DNA_ligase_Arch_LigB"/>
    <property type="match status" value="1"/>
</dbReference>
<dbReference type="CDD" id="cd07969">
    <property type="entry name" value="OBF_DNA_ligase_I"/>
    <property type="match status" value="1"/>
</dbReference>
<dbReference type="FunFam" id="1.10.3260.10:FF:000007">
    <property type="entry name" value="DNA ligase"/>
    <property type="match status" value="1"/>
</dbReference>
<dbReference type="FunFam" id="2.40.50.140:FF:000062">
    <property type="entry name" value="DNA ligase"/>
    <property type="match status" value="1"/>
</dbReference>
<dbReference type="FunFam" id="3.30.470.30:FF:000012">
    <property type="entry name" value="Probable DNA ligase"/>
    <property type="match status" value="1"/>
</dbReference>
<dbReference type="Gene3D" id="1.10.3260.10">
    <property type="entry name" value="DNA ligase, ATP-dependent, N-terminal domain"/>
    <property type="match status" value="1"/>
</dbReference>
<dbReference type="Gene3D" id="3.30.470.30">
    <property type="entry name" value="DNA ligase/mRNA capping enzyme"/>
    <property type="match status" value="1"/>
</dbReference>
<dbReference type="Gene3D" id="2.40.50.140">
    <property type="entry name" value="Nucleic acid-binding proteins"/>
    <property type="match status" value="1"/>
</dbReference>
<dbReference type="HAMAP" id="MF_00407">
    <property type="entry name" value="DNA_ligase"/>
    <property type="match status" value="1"/>
</dbReference>
<dbReference type="InterPro" id="IPR050191">
    <property type="entry name" value="ATP-dep_DNA_ligase"/>
</dbReference>
<dbReference type="InterPro" id="IPR022865">
    <property type="entry name" value="DNA_ligae_ATP-dep_bac/arc"/>
</dbReference>
<dbReference type="InterPro" id="IPR000977">
    <property type="entry name" value="DNA_ligase_ATP-dep"/>
</dbReference>
<dbReference type="InterPro" id="IPR012309">
    <property type="entry name" value="DNA_ligase_ATP-dep_C"/>
</dbReference>
<dbReference type="InterPro" id="IPR012310">
    <property type="entry name" value="DNA_ligase_ATP-dep_cent"/>
</dbReference>
<dbReference type="InterPro" id="IPR016059">
    <property type="entry name" value="DNA_ligase_ATP-dep_CS"/>
</dbReference>
<dbReference type="InterPro" id="IPR012308">
    <property type="entry name" value="DNA_ligase_ATP-dep_N"/>
</dbReference>
<dbReference type="InterPro" id="IPR036599">
    <property type="entry name" value="DNA_ligase_N_sf"/>
</dbReference>
<dbReference type="InterPro" id="IPR012340">
    <property type="entry name" value="NA-bd_OB-fold"/>
</dbReference>
<dbReference type="NCBIfam" id="TIGR00574">
    <property type="entry name" value="dnl1"/>
    <property type="match status" value="1"/>
</dbReference>
<dbReference type="PANTHER" id="PTHR45674:SF4">
    <property type="entry name" value="DNA LIGASE 1"/>
    <property type="match status" value="1"/>
</dbReference>
<dbReference type="PANTHER" id="PTHR45674">
    <property type="entry name" value="DNA LIGASE 1/3 FAMILY MEMBER"/>
    <property type="match status" value="1"/>
</dbReference>
<dbReference type="Pfam" id="PF04679">
    <property type="entry name" value="DNA_ligase_A_C"/>
    <property type="match status" value="1"/>
</dbReference>
<dbReference type="Pfam" id="PF01068">
    <property type="entry name" value="DNA_ligase_A_M"/>
    <property type="match status" value="1"/>
</dbReference>
<dbReference type="Pfam" id="PF04675">
    <property type="entry name" value="DNA_ligase_A_N"/>
    <property type="match status" value="1"/>
</dbReference>
<dbReference type="SUPFAM" id="SSF117018">
    <property type="entry name" value="ATP-dependent DNA ligase DNA-binding domain"/>
    <property type="match status" value="1"/>
</dbReference>
<dbReference type="SUPFAM" id="SSF56091">
    <property type="entry name" value="DNA ligase/mRNA capping enzyme, catalytic domain"/>
    <property type="match status" value="1"/>
</dbReference>
<dbReference type="SUPFAM" id="SSF50249">
    <property type="entry name" value="Nucleic acid-binding proteins"/>
    <property type="match status" value="1"/>
</dbReference>
<dbReference type="PROSITE" id="PS00697">
    <property type="entry name" value="DNA_LIGASE_A1"/>
    <property type="match status" value="1"/>
</dbReference>
<dbReference type="PROSITE" id="PS00333">
    <property type="entry name" value="DNA_LIGASE_A2"/>
    <property type="match status" value="1"/>
</dbReference>
<dbReference type="PROSITE" id="PS50160">
    <property type="entry name" value="DNA_LIGASE_A3"/>
    <property type="match status" value="1"/>
</dbReference>
<proteinExistence type="inferred from homology"/>
<keyword id="KW-0067">ATP-binding</keyword>
<keyword id="KW-0131">Cell cycle</keyword>
<keyword id="KW-0132">Cell division</keyword>
<keyword id="KW-0227">DNA damage</keyword>
<keyword id="KW-0233">DNA recombination</keyword>
<keyword id="KW-0234">DNA repair</keyword>
<keyword id="KW-0235">DNA replication</keyword>
<keyword id="KW-0436">Ligase</keyword>
<keyword id="KW-0460">Magnesium</keyword>
<keyword id="KW-0479">Metal-binding</keyword>
<keyword id="KW-0547">Nucleotide-binding</keyword>
<keyword id="KW-1185">Reference proteome</keyword>
<name>DNLI_IGNH4</name>
<sequence length="594" mass="66459">MKFSDVVDALERLERTTSRTQIVAILTNLFKKVIEENKDIIDKVVYFIQGKLWPDWYGYPEIGIGEKGIIKAISLAANVKEKEVEGLYKQLGDLGLVAERLMAKAPKGGLMMFVKKKEELTFEKVYETLKRIAFMQGEGSRDLKIKTLAGLLKEASPKEAKYIVRFVQGKLRLGVGDASIIEALAHVAGTTKDVVERAYNLRADLGAVAKIAVTEGPEALKRVRPKPGVPVRPMLAERLNDPKEILKKLGGKGLAEYKYDGERAQIHLLPDGKVVIFSRRLENITRSYPDVVQYAKSGLKAKEAIVEGEIIAVNPETGEPRPFQELMRRRRKHDVALAMSEIPVNVKLFDIIYVDGEDMTNKPLPLRRKRLEEVVEESEEFSLSTAKLVSTPEELEQFFHQSISEGHEGLVVKAVHDKSVYQAGARGWLWIKYKKDYKSEMVEPVDLVVVGAFYGRGRRGGTFGALLVAGYDEKRDAFATVCKVGSGFSDEELARLPELLKPYISETKPPRVISNVKPDVWVRPALVAEIIGAEITLSPIHTCAKDEVSAGSGLAIRFPRFIRWRPDKGPEDATTCGEIVEMYKSRLKKVEEPT</sequence>
<reference key="1">
    <citation type="journal article" date="2008" name="Genome Biol.">
        <title>A genomic analysis of the archaeal system Ignicoccus hospitalis-Nanoarchaeum equitans.</title>
        <authorList>
            <person name="Podar M."/>
            <person name="Anderson I."/>
            <person name="Makarova K.S."/>
            <person name="Elkins J.G."/>
            <person name="Ivanova N."/>
            <person name="Wall M.A."/>
            <person name="Lykidis A."/>
            <person name="Mavromatis K."/>
            <person name="Sun H."/>
            <person name="Hudson M.E."/>
            <person name="Chen W."/>
            <person name="Deciu C."/>
            <person name="Hutchison D."/>
            <person name="Eads J.R."/>
            <person name="Anderson A."/>
            <person name="Fernandes F."/>
            <person name="Szeto E."/>
            <person name="Lapidus A."/>
            <person name="Kyrpides N.C."/>
            <person name="Saier M.H. Jr."/>
            <person name="Richardson P.M."/>
            <person name="Rachel R."/>
            <person name="Huber H."/>
            <person name="Eisen J.A."/>
            <person name="Koonin E.V."/>
            <person name="Keller M."/>
            <person name="Stetter K.O."/>
        </authorList>
    </citation>
    <scope>NUCLEOTIDE SEQUENCE [LARGE SCALE GENOMIC DNA]</scope>
    <source>
        <strain>KIN4/I / DSM 18386 / JCM 14125</strain>
    </source>
</reference>
<gene>
    <name evidence="1" type="primary">lig</name>
    <name type="ordered locus">Igni_0942</name>
</gene>
<evidence type="ECO:0000255" key="1">
    <source>
        <dbReference type="HAMAP-Rule" id="MF_00407"/>
    </source>
</evidence>